<evidence type="ECO:0000256" key="1">
    <source>
        <dbReference type="SAM" id="MobiDB-lite"/>
    </source>
</evidence>
<evidence type="ECO:0000305" key="2"/>
<feature type="chain" id="PRO_0000373760" description="Uncharacterized protein D129L">
    <location>
        <begin position="1"/>
        <end position="129"/>
    </location>
</feature>
<feature type="region of interest" description="Disordered" evidence="1">
    <location>
        <begin position="86"/>
        <end position="129"/>
    </location>
</feature>
<feature type="compositionally biased region" description="Acidic residues" evidence="1">
    <location>
        <begin position="86"/>
        <end position="96"/>
    </location>
</feature>
<feature type="compositionally biased region" description="Polar residues" evidence="1">
    <location>
        <begin position="103"/>
        <end position="117"/>
    </location>
</feature>
<proteinExistence type="inferred from homology"/>
<accession>P0CAM6</accession>
<sequence>MDINPLLYLQAFNNDATTFNTQGHILEQQSDSPYFDTFANAMQAYLDTKQGGNDEEGTIILMDDEDFNDSESLEDFLQMLNEEELNDGFSSDDEPEEHVILTEDNQGEPSETPQATFDITEFIKTEDED</sequence>
<comment type="similarity">
    <text evidence="2">Belongs to the asfivirus D129L family.</text>
</comment>
<protein>
    <recommendedName>
        <fullName>Uncharacterized protein D129L</fullName>
        <shortName>pD129L</shortName>
    </recommendedName>
</protein>
<organismHost>
    <name type="scientific">Ornithodoros</name>
    <name type="common">relapsing fever ticks</name>
    <dbReference type="NCBI Taxonomy" id="6937"/>
</organismHost>
<organismHost>
    <name type="scientific">Phacochoerus aethiopicus</name>
    <name type="common">Warthog</name>
    <dbReference type="NCBI Taxonomy" id="85517"/>
</organismHost>
<organismHost>
    <name type="scientific">Phacochoerus africanus</name>
    <name type="common">Warthog</name>
    <dbReference type="NCBI Taxonomy" id="41426"/>
</organismHost>
<organismHost>
    <name type="scientific">Potamochoerus larvatus</name>
    <name type="common">Bushpig</name>
    <dbReference type="NCBI Taxonomy" id="273792"/>
</organismHost>
<organismHost>
    <name type="scientific">Sus scrofa</name>
    <name type="common">Pig</name>
    <dbReference type="NCBI Taxonomy" id="9823"/>
</organismHost>
<organism>
    <name type="scientific">African swine fever virus (isolate Warthog/Namibia/Wart80/1980)</name>
    <name type="common">ASFV</name>
    <dbReference type="NCBI Taxonomy" id="561444"/>
    <lineage>
        <taxon>Viruses</taxon>
        <taxon>Varidnaviria</taxon>
        <taxon>Bamfordvirae</taxon>
        <taxon>Nucleocytoviricota</taxon>
        <taxon>Pokkesviricetes</taxon>
        <taxon>Asfuvirales</taxon>
        <taxon>Asfarviridae</taxon>
        <taxon>Asfivirus</taxon>
        <taxon>African swine fever virus</taxon>
    </lineage>
</organism>
<name>VFD29_ASFWA</name>
<gene>
    <name type="ordered locus">War-113</name>
</gene>
<dbReference type="EMBL" id="AY261366">
    <property type="status" value="NOT_ANNOTATED_CDS"/>
    <property type="molecule type" value="Genomic_DNA"/>
</dbReference>
<dbReference type="Proteomes" id="UP000000858">
    <property type="component" value="Segment"/>
</dbReference>
<reference key="1">
    <citation type="submission" date="2003-03" db="EMBL/GenBank/DDBJ databases">
        <title>African swine fever virus genomes.</title>
        <authorList>
            <person name="Kutish G.F."/>
            <person name="Rock D.L."/>
        </authorList>
    </citation>
    <scope>NUCLEOTIDE SEQUENCE [LARGE SCALE GENOMIC DNA]</scope>
</reference>